<organism>
    <name type="scientific">Mus musculus</name>
    <name type="common">Mouse</name>
    <dbReference type="NCBI Taxonomy" id="10090"/>
    <lineage>
        <taxon>Eukaryota</taxon>
        <taxon>Metazoa</taxon>
        <taxon>Chordata</taxon>
        <taxon>Craniata</taxon>
        <taxon>Vertebrata</taxon>
        <taxon>Euteleostomi</taxon>
        <taxon>Mammalia</taxon>
        <taxon>Eutheria</taxon>
        <taxon>Euarchontoglires</taxon>
        <taxon>Glires</taxon>
        <taxon>Rodentia</taxon>
        <taxon>Myomorpha</taxon>
        <taxon>Muroidea</taxon>
        <taxon>Muridae</taxon>
        <taxon>Murinae</taxon>
        <taxon>Mus</taxon>
        <taxon>Mus</taxon>
    </lineage>
</organism>
<comment type="function">
    <text evidence="3 5">One gap junction consists of a cluster of closely packed pairs of transmembrane channels, the connexons, through which materials of low MW diffuse from one cell to a neighboring cell. May play a role in myelination in central and peripheral nervous systems.</text>
</comment>
<comment type="subunit">
    <text evidence="6">A connexon is composed of a hexamer of connexins. Interacts with TJP1.</text>
</comment>
<comment type="subcellular location">
    <subcellularLocation>
        <location evidence="6">Cell membrane</location>
        <topology evidence="6">Multi-pass membrane protein</topology>
    </subcellularLocation>
    <subcellularLocation>
        <location evidence="6">Cell junction</location>
        <location evidence="6">Gap junction</location>
    </subcellularLocation>
</comment>
<comment type="tissue specificity">
    <text evidence="4 5 6">Mainly expressed by oligodendrocytes in the central nervous system (at protein level).</text>
</comment>
<comment type="developmental stage">
    <text evidence="5">Expression starts after birth in the central nervous system and parallels myelination process.</text>
</comment>
<comment type="disruption phenotype">
    <text evidence="4 5">Mice display myelination abnormalities characterized by extracellular vacuolation along nerve fibers. Mice lacking both Gja12 and Gjb1 display a more severe demyelination phenotype associated with oligodendrocyte death. These mice develop action tremors, tonic seizures, sporadic convulsions and loss of consciousness preceding death in the sixth week after birth.</text>
</comment>
<comment type="similarity">
    <text evidence="7">Belongs to the connexin family. Gamma-type subfamily.</text>
</comment>
<comment type="caution">
    <text evidence="7">It is uncertain whether Met-1 or Met-4 is the initiator.</text>
</comment>
<comment type="sequence caution" evidence="7">
    <conflict type="erroneous initiation">
        <sequence resource="EMBL-CDS" id="BAC32806"/>
    </conflict>
</comment>
<comment type="sequence caution" evidence="7">
    <conflict type="erroneous initiation">
        <sequence resource="EMBL-CDS" id="CAC19434"/>
    </conflict>
</comment>
<evidence type="ECO:0000255" key="1"/>
<evidence type="ECO:0000256" key="2">
    <source>
        <dbReference type="SAM" id="MobiDB-lite"/>
    </source>
</evidence>
<evidence type="ECO:0000269" key="3">
    <source>
    </source>
</evidence>
<evidence type="ECO:0000269" key="4">
    <source>
    </source>
</evidence>
<evidence type="ECO:0000269" key="5">
    <source>
    </source>
</evidence>
<evidence type="ECO:0000269" key="6">
    <source>
    </source>
</evidence>
<evidence type="ECO:0000305" key="7"/>
<evidence type="ECO:0007744" key="8">
    <source>
    </source>
</evidence>
<evidence type="ECO:0007744" key="9">
    <source>
    </source>
</evidence>
<accession>Q8BQU6</accession>
<accession>Q6TLV2</accession>
<accession>Q8BQS2</accession>
<accession>Q9EPM1</accession>
<proteinExistence type="evidence at protein level"/>
<sequence>MTNMSWSFLTRLLEEIHNHSTFVGKVWLTVLVVFRIVLTAVGGESIYSDEQSKFTCNTRQPGCDNVCYDAFAPLSHVRFWVFQIVVISTPSVMYLGYAVHRLARASEQERRRALRRRPGTRRLPRAQLPPPPPGWPDTTDLGEAEPILALEEDEDEEPGAPEGPGEDTEEERAEDVAAKGGGGDGKTVVTPGPAGQHDGRRRIQREGLMRVYVAQLVVRAAFEVAFLVGQYLLYGFEVPPFFACSRQPCPHVVDCFVSRPTEKTVFLLVMYVVSCLCLLLNLCEMAHLGLGSAQDAVRGRRGASAAGPGPTPRPPPCAFPAAAAGLACPPDYSLVVRAAERARAHDQNLANLALQALRDGAAVAAVSADRDSPPCAGLNATSRGAPRVGGLASGTGSATSGGTVGEQSRPGAQEQLATKPRAGSEKGSTGSRDGKATVWI</sequence>
<name>CXG2_MOUSE</name>
<protein>
    <recommendedName>
        <fullName>Gap junction gamma-2 protein</fullName>
    </recommendedName>
    <alternativeName>
        <fullName>Connexin-47</fullName>
        <shortName>Cx47</shortName>
    </alternativeName>
    <alternativeName>
        <fullName>Gap junction alpha-12 protein</fullName>
    </alternativeName>
</protein>
<dbReference type="EMBL" id="AJ276435">
    <property type="protein sequence ID" value="CAC19434.1"/>
    <property type="status" value="ALT_INIT"/>
    <property type="molecule type" value="Genomic_DNA"/>
</dbReference>
<dbReference type="EMBL" id="AK046421">
    <property type="protein sequence ID" value="BAC32722.1"/>
    <property type="molecule type" value="mRNA"/>
</dbReference>
<dbReference type="EMBL" id="AK046609">
    <property type="protein sequence ID" value="BAC32806.1"/>
    <property type="status" value="ALT_INIT"/>
    <property type="molecule type" value="mRNA"/>
</dbReference>
<dbReference type="EMBL" id="AY394498">
    <property type="protein sequence ID" value="AAR05823.1"/>
    <property type="molecule type" value="mRNA"/>
</dbReference>
<dbReference type="EMBL" id="AY394499">
    <property type="protein sequence ID" value="AAR05824.1"/>
    <property type="molecule type" value="mRNA"/>
</dbReference>
<dbReference type="EMBL" id="AY394500">
    <property type="protein sequence ID" value="AAR05825.1"/>
    <property type="molecule type" value="mRNA"/>
</dbReference>
<dbReference type="CCDS" id="CCDS24760.1"/>
<dbReference type="RefSeq" id="NP_536702.3">
    <property type="nucleotide sequence ID" value="NM_080454.4"/>
</dbReference>
<dbReference type="RefSeq" id="NP_780661.2">
    <property type="nucleotide sequence ID" value="NM_175452.4"/>
</dbReference>
<dbReference type="RefSeq" id="XP_036012142.1">
    <property type="nucleotide sequence ID" value="XM_036156249.1"/>
</dbReference>
<dbReference type="SMR" id="Q8BQU6"/>
<dbReference type="BioGRID" id="228249">
    <property type="interactions" value="1"/>
</dbReference>
<dbReference type="FunCoup" id="Q8BQU6">
    <property type="interactions" value="2"/>
</dbReference>
<dbReference type="IntAct" id="Q8BQU6">
    <property type="interactions" value="1"/>
</dbReference>
<dbReference type="MINT" id="Q8BQU6"/>
<dbReference type="STRING" id="10090.ENSMUSP00000104421"/>
<dbReference type="TCDB" id="1.A.24.2.1">
    <property type="family name" value="the gap junction-forming connexin (connexin) family"/>
</dbReference>
<dbReference type="GlyGen" id="Q8BQU6">
    <property type="glycosylation" value="2 sites, 1 N-linked glycan (1 site)"/>
</dbReference>
<dbReference type="iPTMnet" id="Q8BQU6"/>
<dbReference type="PhosphoSitePlus" id="Q8BQU6"/>
<dbReference type="PaxDb" id="10090-ENSMUSP00000104421"/>
<dbReference type="ProteomicsDB" id="279226"/>
<dbReference type="Antibodypedia" id="34662">
    <property type="antibodies" value="191 antibodies from 28 providers"/>
</dbReference>
<dbReference type="DNASU" id="118454"/>
<dbReference type="Ensembl" id="ENSMUST00000108790.2">
    <property type="protein sequence ID" value="ENSMUSP00000104418.2"/>
    <property type="gene ID" value="ENSMUSG00000043448.14"/>
</dbReference>
<dbReference type="Ensembl" id="ENSMUST00000108793.9">
    <property type="protein sequence ID" value="ENSMUSP00000104421.3"/>
    <property type="gene ID" value="ENSMUSG00000043448.14"/>
</dbReference>
<dbReference type="GeneID" id="118454"/>
<dbReference type="KEGG" id="mmu:118454"/>
<dbReference type="UCSC" id="uc007jde.2">
    <property type="organism name" value="mouse"/>
</dbReference>
<dbReference type="AGR" id="MGI:2153060"/>
<dbReference type="CTD" id="57165"/>
<dbReference type="MGI" id="MGI:2153060">
    <property type="gene designation" value="Gjc2"/>
</dbReference>
<dbReference type="VEuPathDB" id="HostDB:ENSMUSG00000043448"/>
<dbReference type="eggNOG" id="ENOG502QV2G">
    <property type="taxonomic scope" value="Eukaryota"/>
</dbReference>
<dbReference type="GeneTree" id="ENSGT01130000278276"/>
<dbReference type="HOGENOM" id="CLU_037388_4_0_1"/>
<dbReference type="InParanoid" id="Q8BQU6"/>
<dbReference type="OMA" id="ACTKGAG"/>
<dbReference type="OrthoDB" id="10061722at2759"/>
<dbReference type="PhylomeDB" id="Q8BQU6"/>
<dbReference type="TreeFam" id="TF329606"/>
<dbReference type="Reactome" id="R-MMU-190861">
    <property type="pathway name" value="Gap junction assembly"/>
</dbReference>
<dbReference type="BioGRID-ORCS" id="118454">
    <property type="hits" value="3 hits in 76 CRISPR screens"/>
</dbReference>
<dbReference type="PRO" id="PR:Q8BQU6"/>
<dbReference type="Proteomes" id="UP000000589">
    <property type="component" value="Chromosome 11"/>
</dbReference>
<dbReference type="RNAct" id="Q8BQU6">
    <property type="molecule type" value="protein"/>
</dbReference>
<dbReference type="Bgee" id="ENSMUSG00000043448">
    <property type="expression patterns" value="Expressed in lumbar subsegment of spinal cord and 140 other cell types or tissues"/>
</dbReference>
<dbReference type="GO" id="GO:0005922">
    <property type="term" value="C:connexin complex"/>
    <property type="evidence" value="ECO:0007669"/>
    <property type="project" value="InterPro"/>
</dbReference>
<dbReference type="GO" id="GO:0005921">
    <property type="term" value="C:gap junction"/>
    <property type="evidence" value="ECO:0000314"/>
    <property type="project" value="MGI"/>
</dbReference>
<dbReference type="GO" id="GO:0043209">
    <property type="term" value="C:myelin sheath"/>
    <property type="evidence" value="ECO:0000314"/>
    <property type="project" value="MGI"/>
</dbReference>
<dbReference type="GO" id="GO:0005243">
    <property type="term" value="F:gap junction channel activity"/>
    <property type="evidence" value="ECO:0000314"/>
    <property type="project" value="MGI"/>
</dbReference>
<dbReference type="GO" id="GO:1903763">
    <property type="term" value="F:gap junction channel activity involved in cell communication by electrical coupling"/>
    <property type="evidence" value="ECO:0007669"/>
    <property type="project" value="Ensembl"/>
</dbReference>
<dbReference type="GO" id="GO:0007267">
    <property type="term" value="P:cell-cell signaling"/>
    <property type="evidence" value="ECO:0000314"/>
    <property type="project" value="MGI"/>
</dbReference>
<dbReference type="GO" id="GO:0009636">
    <property type="term" value="P:response to toxic substance"/>
    <property type="evidence" value="ECO:0000314"/>
    <property type="project" value="MGI"/>
</dbReference>
<dbReference type="Gene3D" id="1.20.1440.80">
    <property type="entry name" value="Gap junction channel protein cysteine-rich domain"/>
    <property type="match status" value="1"/>
</dbReference>
<dbReference type="InterPro" id="IPR000500">
    <property type="entry name" value="Connexin"/>
</dbReference>
<dbReference type="InterPro" id="IPR019570">
    <property type="entry name" value="Connexin_CCC"/>
</dbReference>
<dbReference type="InterPro" id="IPR017990">
    <property type="entry name" value="Connexin_CS"/>
</dbReference>
<dbReference type="InterPro" id="IPR013092">
    <property type="entry name" value="Connexin_N"/>
</dbReference>
<dbReference type="InterPro" id="IPR038359">
    <property type="entry name" value="Connexin_N_sf"/>
</dbReference>
<dbReference type="PANTHER" id="PTHR11984">
    <property type="entry name" value="CONNEXIN"/>
    <property type="match status" value="1"/>
</dbReference>
<dbReference type="PANTHER" id="PTHR11984:SF52">
    <property type="entry name" value="GAP JUNCTION GAMMA-2 PROTEIN"/>
    <property type="match status" value="1"/>
</dbReference>
<dbReference type="Pfam" id="PF00029">
    <property type="entry name" value="Connexin"/>
    <property type="match status" value="1"/>
</dbReference>
<dbReference type="PRINTS" id="PR00206">
    <property type="entry name" value="CONNEXIN"/>
</dbReference>
<dbReference type="SMART" id="SM00037">
    <property type="entry name" value="CNX"/>
    <property type="match status" value="1"/>
</dbReference>
<dbReference type="SMART" id="SM01089">
    <property type="entry name" value="Connexin_CCC"/>
    <property type="match status" value="1"/>
</dbReference>
<dbReference type="PROSITE" id="PS00407">
    <property type="entry name" value="CONNEXINS_1"/>
    <property type="match status" value="1"/>
</dbReference>
<dbReference type="PROSITE" id="PS00408">
    <property type="entry name" value="CONNEXINS_2"/>
    <property type="match status" value="1"/>
</dbReference>
<gene>
    <name type="primary">Gjc2</name>
    <name type="synonym">Gja12</name>
</gene>
<keyword id="KW-0965">Cell junction</keyword>
<keyword id="KW-1003">Cell membrane</keyword>
<keyword id="KW-0303">Gap junction</keyword>
<keyword id="KW-0472">Membrane</keyword>
<keyword id="KW-0597">Phosphoprotein</keyword>
<keyword id="KW-1185">Reference proteome</keyword>
<keyword id="KW-0812">Transmembrane</keyword>
<keyword id="KW-1133">Transmembrane helix</keyword>
<feature type="chain" id="PRO_0000057843" description="Gap junction gamma-2 protein">
    <location>
        <begin position="1"/>
        <end position="440"/>
    </location>
</feature>
<feature type="topological domain" description="Cytoplasmic" evidence="1">
    <location>
        <begin position="1"/>
        <end position="21"/>
    </location>
</feature>
<feature type="transmembrane region" description="Helical" evidence="1">
    <location>
        <begin position="22"/>
        <end position="42"/>
    </location>
</feature>
<feature type="topological domain" description="Extracellular" evidence="1">
    <location>
        <begin position="43"/>
        <end position="78"/>
    </location>
</feature>
<feature type="transmembrane region" description="Helical" evidence="1">
    <location>
        <begin position="79"/>
        <end position="99"/>
    </location>
</feature>
<feature type="topological domain" description="Cytoplasmic" evidence="1">
    <location>
        <begin position="100"/>
        <end position="223"/>
    </location>
</feature>
<feature type="transmembrane region" description="Helical" evidence="1">
    <location>
        <begin position="224"/>
        <end position="244"/>
    </location>
</feature>
<feature type="topological domain" description="Extracellular" evidence="1">
    <location>
        <begin position="245"/>
        <end position="264"/>
    </location>
</feature>
<feature type="transmembrane region" description="Helical" evidence="1">
    <location>
        <begin position="265"/>
        <end position="285"/>
    </location>
</feature>
<feature type="topological domain" description="Cytoplasmic" evidence="1">
    <location>
        <begin position="286"/>
        <end position="440"/>
    </location>
</feature>
<feature type="region of interest" description="Disordered" evidence="2">
    <location>
        <begin position="108"/>
        <end position="199"/>
    </location>
</feature>
<feature type="region of interest" description="Disordered" evidence="2">
    <location>
        <begin position="369"/>
        <end position="440"/>
    </location>
</feature>
<feature type="compositionally biased region" description="Basic residues" evidence="2">
    <location>
        <begin position="112"/>
        <end position="124"/>
    </location>
</feature>
<feature type="compositionally biased region" description="Low complexity" evidence="2">
    <location>
        <begin position="136"/>
        <end position="149"/>
    </location>
</feature>
<feature type="compositionally biased region" description="Acidic residues" evidence="2">
    <location>
        <begin position="150"/>
        <end position="173"/>
    </location>
</feature>
<feature type="compositionally biased region" description="Low complexity" evidence="2">
    <location>
        <begin position="388"/>
        <end position="401"/>
    </location>
</feature>
<feature type="modified residue" description="Phosphoserine" evidence="8 9">
    <location>
        <position position="372"/>
    </location>
</feature>
<feature type="sequence conflict" description="In Ref. 2; BAC32722." evidence="7" ref="2">
    <original>L</original>
    <variation>V</variation>
    <location>
        <position position="216"/>
    </location>
</feature>
<feature type="sequence conflict" description="In Ref. 1; CAC19434." evidence="7" ref="1">
    <original>V</original>
    <variation>A</variation>
    <location>
        <position position="388"/>
    </location>
</feature>
<feature type="sequence conflict" description="In Ref. 1; CAC19434." evidence="7" ref="1">
    <original>S</original>
    <variation>G</variation>
    <location>
        <position position="408"/>
    </location>
</feature>
<reference key="1">
    <citation type="journal article" date="2001" name="J. Neurosci.">
        <title>Functional expression of the new gap junction gene connexin47 transcribed in mouse brain and spinal cord neurons.</title>
        <authorList>
            <person name="Teubner B."/>
            <person name="Odermatt B."/>
            <person name="Gueldenagel M."/>
            <person name="Soehl G."/>
            <person name="Degen J."/>
            <person name="Bukauskas F.F."/>
            <person name="Kronengold J."/>
            <person name="Verselis V.K."/>
            <person name="Jung Y.T."/>
            <person name="Kozak C.A."/>
            <person name="Schilling K."/>
            <person name="Willecke K."/>
        </authorList>
    </citation>
    <scope>NUCLEOTIDE SEQUENCE [GENOMIC DNA]</scope>
    <scope>FUNCTION</scope>
    <source>
        <strain>129/SvJ</strain>
    </source>
</reference>
<reference key="2">
    <citation type="journal article" date="2005" name="Science">
        <title>The transcriptional landscape of the mammalian genome.</title>
        <authorList>
            <person name="Carninci P."/>
            <person name="Kasukawa T."/>
            <person name="Katayama S."/>
            <person name="Gough J."/>
            <person name="Frith M.C."/>
            <person name="Maeda N."/>
            <person name="Oyama R."/>
            <person name="Ravasi T."/>
            <person name="Lenhard B."/>
            <person name="Wells C."/>
            <person name="Kodzius R."/>
            <person name="Shimokawa K."/>
            <person name="Bajic V.B."/>
            <person name="Brenner S.E."/>
            <person name="Batalov S."/>
            <person name="Forrest A.R."/>
            <person name="Zavolan M."/>
            <person name="Davis M.J."/>
            <person name="Wilming L.G."/>
            <person name="Aidinis V."/>
            <person name="Allen J.E."/>
            <person name="Ambesi-Impiombato A."/>
            <person name="Apweiler R."/>
            <person name="Aturaliya R.N."/>
            <person name="Bailey T.L."/>
            <person name="Bansal M."/>
            <person name="Baxter L."/>
            <person name="Beisel K.W."/>
            <person name="Bersano T."/>
            <person name="Bono H."/>
            <person name="Chalk A.M."/>
            <person name="Chiu K.P."/>
            <person name="Choudhary V."/>
            <person name="Christoffels A."/>
            <person name="Clutterbuck D.R."/>
            <person name="Crowe M.L."/>
            <person name="Dalla E."/>
            <person name="Dalrymple B.P."/>
            <person name="de Bono B."/>
            <person name="Della Gatta G."/>
            <person name="di Bernardo D."/>
            <person name="Down T."/>
            <person name="Engstrom P."/>
            <person name="Fagiolini M."/>
            <person name="Faulkner G."/>
            <person name="Fletcher C.F."/>
            <person name="Fukushima T."/>
            <person name="Furuno M."/>
            <person name="Futaki S."/>
            <person name="Gariboldi M."/>
            <person name="Georgii-Hemming P."/>
            <person name="Gingeras T.R."/>
            <person name="Gojobori T."/>
            <person name="Green R.E."/>
            <person name="Gustincich S."/>
            <person name="Harbers M."/>
            <person name="Hayashi Y."/>
            <person name="Hensch T.K."/>
            <person name="Hirokawa N."/>
            <person name="Hill D."/>
            <person name="Huminiecki L."/>
            <person name="Iacono M."/>
            <person name="Ikeo K."/>
            <person name="Iwama A."/>
            <person name="Ishikawa T."/>
            <person name="Jakt M."/>
            <person name="Kanapin A."/>
            <person name="Katoh M."/>
            <person name="Kawasawa Y."/>
            <person name="Kelso J."/>
            <person name="Kitamura H."/>
            <person name="Kitano H."/>
            <person name="Kollias G."/>
            <person name="Krishnan S.P."/>
            <person name="Kruger A."/>
            <person name="Kummerfeld S.K."/>
            <person name="Kurochkin I.V."/>
            <person name="Lareau L.F."/>
            <person name="Lazarevic D."/>
            <person name="Lipovich L."/>
            <person name="Liu J."/>
            <person name="Liuni S."/>
            <person name="McWilliam S."/>
            <person name="Madan Babu M."/>
            <person name="Madera M."/>
            <person name="Marchionni L."/>
            <person name="Matsuda H."/>
            <person name="Matsuzawa S."/>
            <person name="Miki H."/>
            <person name="Mignone F."/>
            <person name="Miyake S."/>
            <person name="Morris K."/>
            <person name="Mottagui-Tabar S."/>
            <person name="Mulder N."/>
            <person name="Nakano N."/>
            <person name="Nakauchi H."/>
            <person name="Ng P."/>
            <person name="Nilsson R."/>
            <person name="Nishiguchi S."/>
            <person name="Nishikawa S."/>
            <person name="Nori F."/>
            <person name="Ohara O."/>
            <person name="Okazaki Y."/>
            <person name="Orlando V."/>
            <person name="Pang K.C."/>
            <person name="Pavan W.J."/>
            <person name="Pavesi G."/>
            <person name="Pesole G."/>
            <person name="Petrovsky N."/>
            <person name="Piazza S."/>
            <person name="Reed J."/>
            <person name="Reid J.F."/>
            <person name="Ring B.Z."/>
            <person name="Ringwald M."/>
            <person name="Rost B."/>
            <person name="Ruan Y."/>
            <person name="Salzberg S.L."/>
            <person name="Sandelin A."/>
            <person name="Schneider C."/>
            <person name="Schoenbach C."/>
            <person name="Sekiguchi K."/>
            <person name="Semple C.A."/>
            <person name="Seno S."/>
            <person name="Sessa L."/>
            <person name="Sheng Y."/>
            <person name="Shibata Y."/>
            <person name="Shimada H."/>
            <person name="Shimada K."/>
            <person name="Silva D."/>
            <person name="Sinclair B."/>
            <person name="Sperling S."/>
            <person name="Stupka E."/>
            <person name="Sugiura K."/>
            <person name="Sultana R."/>
            <person name="Takenaka Y."/>
            <person name="Taki K."/>
            <person name="Tammoja K."/>
            <person name="Tan S.L."/>
            <person name="Tang S."/>
            <person name="Taylor M.S."/>
            <person name="Tegner J."/>
            <person name="Teichmann S.A."/>
            <person name="Ueda H.R."/>
            <person name="van Nimwegen E."/>
            <person name="Verardo R."/>
            <person name="Wei C.L."/>
            <person name="Yagi K."/>
            <person name="Yamanishi H."/>
            <person name="Zabarovsky E."/>
            <person name="Zhu S."/>
            <person name="Zimmer A."/>
            <person name="Hide W."/>
            <person name="Bult C."/>
            <person name="Grimmond S.M."/>
            <person name="Teasdale R.D."/>
            <person name="Liu E.T."/>
            <person name="Brusic V."/>
            <person name="Quackenbush J."/>
            <person name="Wahlestedt C."/>
            <person name="Mattick J.S."/>
            <person name="Hume D.A."/>
            <person name="Kai C."/>
            <person name="Sasaki D."/>
            <person name="Tomaru Y."/>
            <person name="Fukuda S."/>
            <person name="Kanamori-Katayama M."/>
            <person name="Suzuki M."/>
            <person name="Aoki J."/>
            <person name="Arakawa T."/>
            <person name="Iida J."/>
            <person name="Imamura K."/>
            <person name="Itoh M."/>
            <person name="Kato T."/>
            <person name="Kawaji H."/>
            <person name="Kawagashira N."/>
            <person name="Kawashima T."/>
            <person name="Kojima M."/>
            <person name="Kondo S."/>
            <person name="Konno H."/>
            <person name="Nakano K."/>
            <person name="Ninomiya N."/>
            <person name="Nishio T."/>
            <person name="Okada M."/>
            <person name="Plessy C."/>
            <person name="Shibata K."/>
            <person name="Shiraki T."/>
            <person name="Suzuki S."/>
            <person name="Tagami M."/>
            <person name="Waki K."/>
            <person name="Watahiki A."/>
            <person name="Okamura-Oho Y."/>
            <person name="Suzuki H."/>
            <person name="Kawai J."/>
            <person name="Hayashizaki Y."/>
        </authorList>
    </citation>
    <scope>NUCLEOTIDE SEQUENCE [LARGE SCALE MRNA]</scope>
    <source>
        <strain>C57BL/6J</strain>
        <tissue>Adipose tissue</tissue>
        <tissue>Corpora quadrigemina</tissue>
    </source>
</reference>
<reference key="3">
    <citation type="journal article" date="2005" name="Genomics">
        <title>Variable promoter usage and alternative splicing in five mouse connexin genes.</title>
        <authorList>
            <person name="Anderson C.L."/>
            <person name="Zundel M.A."/>
            <person name="Werner R."/>
        </authorList>
    </citation>
    <scope>NUCLEOTIDE SEQUENCE [MRNA] OF 1-79</scope>
    <source>
        <strain>Swiss Webster</strain>
    </source>
</reference>
<reference key="4">
    <citation type="journal article" date="2003" name="J. Neurosci.">
        <title>Connexin 47 (Cx47)-deficient mice with enhanced green fluorescent protein reporter gene reveal predominant oligodendrocytic expression of Cx47 and display vacuolized myelin in the CNS.</title>
        <authorList>
            <person name="Odermatt B."/>
            <person name="Wellershaus K."/>
            <person name="Wallraff A."/>
            <person name="Seifert G."/>
            <person name="Degen J."/>
            <person name="Euwens C."/>
            <person name="Fuss B."/>
            <person name="Buessow H."/>
            <person name="Schilling K."/>
            <person name="Steinhaeuser C."/>
            <person name="Willecke K."/>
        </authorList>
    </citation>
    <scope>DISRUPTION PHENOTYPE</scope>
    <scope>TISSUE SPECIFICITY</scope>
</reference>
<reference key="5">
    <citation type="journal article" date="2003" name="J. Neurosci.">
        <title>Connexins are critical for normal myelination in the CNS.</title>
        <authorList>
            <person name="Menichella D.M."/>
            <person name="Goodenough D.A."/>
            <person name="Sirkowski E."/>
            <person name="Scherer S.S."/>
            <person name="Paul D.L."/>
        </authorList>
    </citation>
    <scope>DISRUPTION PHENOTYPE</scope>
    <scope>FUNCTION</scope>
    <scope>TISSUE SPECIFICITY</scope>
    <scope>DEVELOPMENTAL STAGE</scope>
</reference>
<reference key="6">
    <citation type="journal article" date="2004" name="Neuroscience">
        <title>Connexin47, connexin29 and connexin32 co-expression in oligodendrocytes and Cx47 association with zonula occludens-1 (ZO-1) in mouse brain.</title>
        <authorList>
            <person name="Li X."/>
            <person name="Ionescu A.V."/>
            <person name="Lynn B.D."/>
            <person name="Lu S."/>
            <person name="Kamasawa N."/>
            <person name="Morita M."/>
            <person name="Davidson K.G.V."/>
            <person name="Yasumura T."/>
            <person name="Rash J.E."/>
            <person name="Nagy J.I."/>
        </authorList>
    </citation>
    <scope>INTERACTION WITH TJP1</scope>
    <scope>TISSUE SPECIFICITY</scope>
    <scope>SUBCELLULAR LOCATION</scope>
</reference>
<reference key="7">
    <citation type="journal article" date="2006" name="Mol. Cell. Proteomics">
        <title>Comprehensive identification of phosphorylation sites in postsynaptic density preparations.</title>
        <authorList>
            <person name="Trinidad J.C."/>
            <person name="Specht C.G."/>
            <person name="Thalhammer A."/>
            <person name="Schoepfer R."/>
            <person name="Burlingame A.L."/>
        </authorList>
    </citation>
    <scope>PHOSPHORYLATION [LARGE SCALE ANALYSIS] AT SER-372</scope>
    <scope>IDENTIFICATION BY MASS SPECTROMETRY [LARGE SCALE ANALYSIS]</scope>
    <source>
        <tissue>Brain</tissue>
    </source>
</reference>
<reference key="8">
    <citation type="journal article" date="2010" name="Cell">
        <title>A tissue-specific atlas of mouse protein phosphorylation and expression.</title>
        <authorList>
            <person name="Huttlin E.L."/>
            <person name="Jedrychowski M.P."/>
            <person name="Elias J.E."/>
            <person name="Goswami T."/>
            <person name="Rad R."/>
            <person name="Beausoleil S.A."/>
            <person name="Villen J."/>
            <person name="Haas W."/>
            <person name="Sowa M.E."/>
            <person name="Gygi S.P."/>
        </authorList>
    </citation>
    <scope>PHOSPHORYLATION [LARGE SCALE ANALYSIS] AT SER-372</scope>
    <scope>IDENTIFICATION BY MASS SPECTROMETRY [LARGE SCALE ANALYSIS]</scope>
    <source>
        <tissue>Brain</tissue>
    </source>
</reference>